<proteinExistence type="inferred from homology"/>
<evidence type="ECO:0000255" key="1">
    <source>
        <dbReference type="HAMAP-Rule" id="MF_01393"/>
    </source>
</evidence>
<comment type="function">
    <text evidence="1">Key component of the proton channel; it plays a direct role in the translocation of protons across the membrane.</text>
</comment>
<comment type="subunit">
    <text evidence="1">F-type ATPases have 2 components, CF(1) - the catalytic core - and CF(0) - the membrane proton channel. CF(1) has five subunits: alpha(3), beta(3), gamma(1), delta(1), epsilon(1). CF(0) has four main subunits: a, b, b' and c.</text>
</comment>
<comment type="subcellular location">
    <subcellularLocation>
        <location evidence="1">Plastid</location>
        <location evidence="1">Chloroplast thylakoid membrane</location>
        <topology evidence="1">Multi-pass membrane protein</topology>
    </subcellularLocation>
</comment>
<comment type="similarity">
    <text evidence="1">Belongs to the ATPase A chain family.</text>
</comment>
<sequence>MNVLLCYINTLNRFYDISAVEVGQHFYWQIGDFQVHAQVLITSWVVIAILLISTILVVRNPQTIPTSGQNFFEYVLEFIRDVSKTQIGEEYGPWVPFIGTLFLFIFVSNWSGALLPWKIIKLPHGELAAPTNDINTTVALALLTSVAYFYAGISKKGLAYFGKYIQPTPILLPINILEDFTKPLSLSFRLFGNILADELVVVVLVSLVPLVVPIPVMFLGLFTSGIQALIFATLAAAYIGESMEGHH</sequence>
<keyword id="KW-0066">ATP synthesis</keyword>
<keyword id="KW-0138">CF(0)</keyword>
<keyword id="KW-0150">Chloroplast</keyword>
<keyword id="KW-0375">Hydrogen ion transport</keyword>
<keyword id="KW-0406">Ion transport</keyword>
<keyword id="KW-0472">Membrane</keyword>
<keyword id="KW-0934">Plastid</keyword>
<keyword id="KW-0793">Thylakoid</keyword>
<keyword id="KW-0812">Transmembrane</keyword>
<keyword id="KW-1133">Transmembrane helix</keyword>
<keyword id="KW-0813">Transport</keyword>
<dbReference type="EMBL" id="X03575">
    <property type="protein sequence ID" value="CAA27255.1"/>
    <property type="molecule type" value="Genomic_DNA"/>
</dbReference>
<dbReference type="EMBL" id="X05917">
    <property type="protein sequence ID" value="CAA29349.1"/>
    <property type="molecule type" value="Genomic_DNA"/>
</dbReference>
<dbReference type="EMBL" id="X03912">
    <property type="protein sequence ID" value="CAA27547.1"/>
    <property type="molecule type" value="Genomic_DNA"/>
</dbReference>
<dbReference type="PIR" id="S00586">
    <property type="entry name" value="PWPMA6"/>
</dbReference>
<dbReference type="RefSeq" id="YP_003587564.1">
    <property type="nucleotide sequence ID" value="NC_014057.1"/>
</dbReference>
<dbReference type="SMR" id="P06452"/>
<dbReference type="EnsemblPlants" id="Psat0s2754g0240.1">
    <property type="protein sequence ID" value="Psat0s2754g0240.1.cds1"/>
    <property type="gene ID" value="Psat0s2754g0240"/>
</dbReference>
<dbReference type="EnsemblPlants" id="Psat0s2961g0080.1">
    <property type="protein sequence ID" value="Psat0s2961g0080.1.cds1"/>
    <property type="gene ID" value="Psat0s2961g0080"/>
</dbReference>
<dbReference type="EnsemblPlants" id="Psat6g219400.1">
    <property type="protein sequence ID" value="Psat6g219400.1.cds1"/>
    <property type="gene ID" value="Psat6g219400"/>
</dbReference>
<dbReference type="EnsemblPlants" id="Psat7g033680.1">
    <property type="protein sequence ID" value="Psat7g033680.1.cds1"/>
    <property type="gene ID" value="Psat7g033680"/>
</dbReference>
<dbReference type="GeneID" id="9073116"/>
<dbReference type="Gramene" id="Psat0s2754g0240.1">
    <property type="protein sequence ID" value="Psat0s2754g0240.1.cds1"/>
    <property type="gene ID" value="Psat0s2754g0240"/>
</dbReference>
<dbReference type="Gramene" id="Psat0s2961g0080.1">
    <property type="protein sequence ID" value="Psat0s2961g0080.1.cds1"/>
    <property type="gene ID" value="Psat0s2961g0080"/>
</dbReference>
<dbReference type="Gramene" id="Psat6g219400.1">
    <property type="protein sequence ID" value="Psat6g219400.1.cds1"/>
    <property type="gene ID" value="Psat6g219400"/>
</dbReference>
<dbReference type="Gramene" id="Psat7g033680.1">
    <property type="protein sequence ID" value="Psat7g033680.1.cds1"/>
    <property type="gene ID" value="Psat7g033680"/>
</dbReference>
<dbReference type="OrthoDB" id="1378527at2759"/>
<dbReference type="GO" id="GO:0009535">
    <property type="term" value="C:chloroplast thylakoid membrane"/>
    <property type="evidence" value="ECO:0007669"/>
    <property type="project" value="UniProtKB-SubCell"/>
</dbReference>
<dbReference type="GO" id="GO:0005886">
    <property type="term" value="C:plasma membrane"/>
    <property type="evidence" value="ECO:0007669"/>
    <property type="project" value="UniProtKB-UniRule"/>
</dbReference>
<dbReference type="GO" id="GO:0045259">
    <property type="term" value="C:proton-transporting ATP synthase complex"/>
    <property type="evidence" value="ECO:0007669"/>
    <property type="project" value="UniProtKB-KW"/>
</dbReference>
<dbReference type="GO" id="GO:0046933">
    <property type="term" value="F:proton-transporting ATP synthase activity, rotational mechanism"/>
    <property type="evidence" value="ECO:0007669"/>
    <property type="project" value="UniProtKB-UniRule"/>
</dbReference>
<dbReference type="CDD" id="cd00310">
    <property type="entry name" value="ATP-synt_Fo_a_6"/>
    <property type="match status" value="1"/>
</dbReference>
<dbReference type="FunFam" id="1.20.120.220:FF:000001">
    <property type="entry name" value="ATP synthase subunit a, chloroplastic"/>
    <property type="match status" value="1"/>
</dbReference>
<dbReference type="Gene3D" id="1.20.120.220">
    <property type="entry name" value="ATP synthase, F0 complex, subunit A"/>
    <property type="match status" value="1"/>
</dbReference>
<dbReference type="HAMAP" id="MF_01393">
    <property type="entry name" value="ATP_synth_a_bact"/>
    <property type="match status" value="1"/>
</dbReference>
<dbReference type="InterPro" id="IPR045082">
    <property type="entry name" value="ATP_syn_F0_a_bact/chloroplast"/>
</dbReference>
<dbReference type="InterPro" id="IPR000568">
    <property type="entry name" value="ATP_synth_F0_asu"/>
</dbReference>
<dbReference type="InterPro" id="IPR023011">
    <property type="entry name" value="ATP_synth_F0_asu_AS"/>
</dbReference>
<dbReference type="InterPro" id="IPR035908">
    <property type="entry name" value="F0_ATP_A_sf"/>
</dbReference>
<dbReference type="NCBIfam" id="TIGR01131">
    <property type="entry name" value="ATP_synt_6_or_A"/>
    <property type="match status" value="1"/>
</dbReference>
<dbReference type="PANTHER" id="PTHR42823">
    <property type="entry name" value="ATP SYNTHASE SUBUNIT A, CHLOROPLASTIC"/>
    <property type="match status" value="1"/>
</dbReference>
<dbReference type="PANTHER" id="PTHR42823:SF3">
    <property type="entry name" value="ATP SYNTHASE SUBUNIT A, CHLOROPLASTIC"/>
    <property type="match status" value="1"/>
</dbReference>
<dbReference type="Pfam" id="PF00119">
    <property type="entry name" value="ATP-synt_A"/>
    <property type="match status" value="1"/>
</dbReference>
<dbReference type="PRINTS" id="PR00123">
    <property type="entry name" value="ATPASEA"/>
</dbReference>
<dbReference type="SUPFAM" id="SSF81336">
    <property type="entry name" value="F1F0 ATP synthase subunit A"/>
    <property type="match status" value="1"/>
</dbReference>
<dbReference type="PROSITE" id="PS00449">
    <property type="entry name" value="ATPASE_A"/>
    <property type="match status" value="1"/>
</dbReference>
<reference key="1">
    <citation type="journal article" date="1986" name="EMBO J.">
        <title>A sixth subunit of ATP synthase, an F(0) component, is encoded in the pea chloroplast genome.</title>
        <authorList>
            <person name="Cozens A.L."/>
            <person name="Walker J.E."/>
            <person name="Phillips A.L."/>
            <person name="Huttly A.K."/>
            <person name="Gray J.C."/>
        </authorList>
    </citation>
    <scope>NUCLEOTIDE SEQUENCE [GENOMIC DNA]</scope>
</reference>
<reference key="2">
    <citation type="journal article" date="1987" name="J. Mol. Biol.">
        <title>A gene cluster in the spinach and pea chloroplast genomes encoding one CF1 and three CF0 subunits of the H+-ATP synthase complex and the ribosomal protein S2.</title>
        <authorList>
            <person name="Hudson G.S."/>
            <person name="Mason J.G."/>
            <person name="Holton T.A."/>
            <person name="Koller B."/>
            <person name="Cox G.B."/>
            <person name="Whitfeld P.R."/>
            <person name="Bottomley W."/>
        </authorList>
    </citation>
    <scope>NUCLEOTIDE SEQUENCE [GENOMIC DNA]</scope>
</reference>
<reference key="3">
    <citation type="journal article" date="1986" name="Biochem. J.">
        <title>Pea chloroplast DNA encodes homologues of Escherichia coli ribosomal subunit S2 and the beta'-subunit of RNA polymerase.</title>
        <authorList>
            <person name="Cozens A.L."/>
            <person name="Walker J.E."/>
        </authorList>
    </citation>
    <scope>NUCLEOTIDE SEQUENCE [GENOMIC DNA] OF 1-4</scope>
</reference>
<geneLocation type="chloroplast"/>
<feature type="chain" id="PRO_0000002596" description="ATP synthase subunit a, chloroplastic">
    <location>
        <begin position="1"/>
        <end position="247"/>
    </location>
</feature>
<feature type="transmembrane region" description="Helical" evidence="1">
    <location>
        <begin position="38"/>
        <end position="58"/>
    </location>
</feature>
<feature type="transmembrane region" description="Helical" evidence="1">
    <location>
        <begin position="95"/>
        <end position="115"/>
    </location>
</feature>
<feature type="transmembrane region" description="Helical" evidence="1">
    <location>
        <begin position="134"/>
        <end position="154"/>
    </location>
</feature>
<feature type="transmembrane region" description="Helical" evidence="1">
    <location>
        <begin position="199"/>
        <end position="219"/>
    </location>
</feature>
<feature type="transmembrane region" description="Helical" evidence="1">
    <location>
        <begin position="220"/>
        <end position="240"/>
    </location>
</feature>
<name>ATPI_PEA</name>
<organism>
    <name type="scientific">Pisum sativum</name>
    <name type="common">Garden pea</name>
    <name type="synonym">Lathyrus oleraceus</name>
    <dbReference type="NCBI Taxonomy" id="3888"/>
    <lineage>
        <taxon>Eukaryota</taxon>
        <taxon>Viridiplantae</taxon>
        <taxon>Streptophyta</taxon>
        <taxon>Embryophyta</taxon>
        <taxon>Tracheophyta</taxon>
        <taxon>Spermatophyta</taxon>
        <taxon>Magnoliopsida</taxon>
        <taxon>eudicotyledons</taxon>
        <taxon>Gunneridae</taxon>
        <taxon>Pentapetalae</taxon>
        <taxon>rosids</taxon>
        <taxon>fabids</taxon>
        <taxon>Fabales</taxon>
        <taxon>Fabaceae</taxon>
        <taxon>Papilionoideae</taxon>
        <taxon>50 kb inversion clade</taxon>
        <taxon>NPAAA clade</taxon>
        <taxon>Hologalegina</taxon>
        <taxon>IRL clade</taxon>
        <taxon>Fabeae</taxon>
        <taxon>Pisum</taxon>
    </lineage>
</organism>
<accession>P06452</accession>
<gene>
    <name evidence="1" type="primary">atpI</name>
</gene>
<protein>
    <recommendedName>
        <fullName evidence="1">ATP synthase subunit a, chloroplastic</fullName>
    </recommendedName>
    <alternativeName>
        <fullName evidence="1">ATP synthase F0 sector subunit a</fullName>
    </alternativeName>
    <alternativeName>
        <fullName evidence="1">F-ATPase subunit IV</fullName>
    </alternativeName>
</protein>